<organism>
    <name type="scientific">Homo sapiens</name>
    <name type="common">Human</name>
    <dbReference type="NCBI Taxonomy" id="9606"/>
    <lineage>
        <taxon>Eukaryota</taxon>
        <taxon>Metazoa</taxon>
        <taxon>Chordata</taxon>
        <taxon>Craniata</taxon>
        <taxon>Vertebrata</taxon>
        <taxon>Euteleostomi</taxon>
        <taxon>Mammalia</taxon>
        <taxon>Eutheria</taxon>
        <taxon>Euarchontoglires</taxon>
        <taxon>Primates</taxon>
        <taxon>Haplorrhini</taxon>
        <taxon>Catarrhini</taxon>
        <taxon>Hominidae</taxon>
        <taxon>Homo</taxon>
    </lineage>
</organism>
<comment type="function">
    <text evidence="1">Regulator of red blood cell formation.</text>
</comment>
<comment type="subunit">
    <text evidence="4 5">Homooligomer; disulfide-linked.</text>
</comment>
<comment type="interaction">
    <interactant intactId="EBI-12188413">
        <id>B2RUZ4</id>
    </interactant>
    <interactant intactId="EBI-7054139">
        <id>Q68DC2</id>
        <label>ANKS6</label>
    </interactant>
    <organismsDiffer>false</organismsDiffer>
    <experiments>3</experiments>
</comment>
<comment type="interaction">
    <interactant intactId="EBI-12188413">
        <id>B2RUZ4</id>
    </interactant>
    <interactant intactId="EBI-13059134">
        <id>Q13520</id>
        <label>AQP6</label>
    </interactant>
    <organismsDiffer>false</organismsDiffer>
    <experiments>3</experiments>
</comment>
<comment type="interaction">
    <interactant intactId="EBI-12188413">
        <id>B2RUZ4</id>
    </interactant>
    <interactant intactId="EBI-12239061">
        <id>Q8WWH4</id>
        <label>ASZ1</label>
    </interactant>
    <organismsDiffer>false</organismsDiffer>
    <experiments>3</experiments>
</comment>
<comment type="interaction">
    <interactant intactId="EBI-12188413">
        <id>B2RUZ4</id>
    </interactant>
    <interactant intactId="EBI-747430">
        <id>Q9BXK5</id>
        <label>BCL2L13</label>
    </interactant>
    <organismsDiffer>false</organismsDiffer>
    <experiments>3</experiments>
</comment>
<comment type="interaction">
    <interactant intactId="EBI-12188413">
        <id>B2RUZ4</id>
    </interactant>
    <interactant intactId="EBI-700794">
        <id>Q13323</id>
        <label>BIK</label>
    </interactant>
    <organismsDiffer>false</organismsDiffer>
    <experiments>3</experiments>
</comment>
<comment type="interaction">
    <interactant intactId="EBI-12188413">
        <id>B2RUZ4</id>
    </interactant>
    <interactant intactId="EBI-12222807">
        <id>P04233-2</id>
        <label>CD74</label>
    </interactant>
    <organismsDiffer>false</organismsDiffer>
    <experiments>3</experiments>
</comment>
<comment type="interaction">
    <interactant intactId="EBI-12188413">
        <id>B2RUZ4</id>
    </interactant>
    <interactant intactId="EBI-1045797">
        <id>Q8N5K1</id>
        <label>CISD2</label>
    </interactant>
    <organismsDiffer>false</organismsDiffer>
    <experiments>3</experiments>
</comment>
<comment type="interaction">
    <interactant intactId="EBI-12188413">
        <id>B2RUZ4</id>
    </interactant>
    <interactant intactId="EBI-372265">
        <id>P21964</id>
        <label>COMT</label>
    </interactant>
    <organismsDiffer>false</organismsDiffer>
    <experiments>3</experiments>
</comment>
<comment type="interaction">
    <interactant intactId="EBI-12188413">
        <id>B2RUZ4</id>
    </interactant>
    <interactant intactId="EBI-6942903">
        <id>Q96BA8</id>
        <label>CREB3L1</label>
    </interactant>
    <organismsDiffer>false</organismsDiffer>
    <experiments>3</experiments>
</comment>
<comment type="interaction">
    <interactant intactId="EBI-12188413">
        <id>B2RUZ4</id>
    </interactant>
    <interactant intactId="EBI-8646596">
        <id>P49447</id>
        <label>CYB561</label>
    </interactant>
    <organismsDiffer>false</organismsDiffer>
    <experiments>3</experiments>
</comment>
<comment type="interaction">
    <interactant intactId="EBI-12188413">
        <id>B2RUZ4</id>
    </interactant>
    <interactant intactId="EBI-3915253">
        <id>Q15125</id>
        <label>EBP</label>
    </interactant>
    <organismsDiffer>false</organismsDiffer>
    <experiments>3</experiments>
</comment>
<comment type="interaction">
    <interactant intactId="EBI-12188413">
        <id>B2RUZ4</id>
    </interactant>
    <interactant intactId="EBI-781551">
        <id>Q9Y282</id>
        <label>ERGIC3</label>
    </interactant>
    <organismsDiffer>false</organismsDiffer>
    <experiments>3</experiments>
</comment>
<comment type="interaction">
    <interactant intactId="EBI-12188413">
        <id>B2RUZ4</id>
    </interactant>
    <interactant intactId="EBI-18636064">
        <id>Q8TBP5</id>
        <label>FAM174A</label>
    </interactant>
    <organismsDiffer>false</organismsDiffer>
    <experiments>3</experiments>
</comment>
<comment type="interaction">
    <interactant intactId="EBI-12188413">
        <id>B2RUZ4</id>
    </interactant>
    <interactant intactId="EBI-18304435">
        <id>Q5JX71</id>
        <label>FAM209A</label>
    </interactant>
    <organismsDiffer>false</organismsDiffer>
    <experiments>3</experiments>
</comment>
<comment type="interaction">
    <interactant intactId="EBI-12188413">
        <id>B2RUZ4</id>
    </interactant>
    <interactant intactId="EBI-18938272">
        <id>Q96KR6</id>
        <label>FAM210B</label>
    </interactant>
    <organismsDiffer>false</organismsDiffer>
    <experiments>3</experiments>
</comment>
<comment type="interaction">
    <interactant intactId="EBI-12188413">
        <id>B2RUZ4</id>
    </interactant>
    <interactant intactId="EBI-2833872">
        <id>O15552</id>
        <label>FFAR2</label>
    </interactant>
    <organismsDiffer>false</organismsDiffer>
    <experiments>3</experiments>
</comment>
<comment type="interaction">
    <interactant intactId="EBI-12188413">
        <id>B2RUZ4</id>
    </interactant>
    <interactant intactId="EBI-12142257">
        <id>Q8TBE3</id>
        <label>FNDC9</label>
    </interactant>
    <organismsDiffer>false</organismsDiffer>
    <experiments>3</experiments>
</comment>
<comment type="interaction">
    <interactant intactId="EBI-12188413">
        <id>B2RUZ4</id>
    </interactant>
    <interactant intactId="EBI-17458373">
        <id>P48165</id>
        <label>GJA8</label>
    </interactant>
    <organismsDiffer>false</organismsDiffer>
    <experiments>3</experiments>
</comment>
<comment type="interaction">
    <interactant intactId="EBI-12188413">
        <id>B2RUZ4</id>
    </interactant>
    <interactant intactId="EBI-3909454">
        <id>O95377</id>
        <label>GJB5</label>
    </interactant>
    <organismsDiffer>false</organismsDiffer>
    <experiments>3</experiments>
</comment>
<comment type="interaction">
    <interactant intactId="EBI-12188413">
        <id>B2RUZ4</id>
    </interactant>
    <interactant intactId="EBI-530257">
        <id>Q6Y1H2</id>
        <label>HACD2</label>
    </interactant>
    <organismsDiffer>false</organismsDiffer>
    <experiments>3</experiments>
</comment>
<comment type="interaction">
    <interactant intactId="EBI-12188413">
        <id>B2RUZ4</id>
    </interactant>
    <interactant intactId="EBI-18053395">
        <id>Q7Z5P4</id>
        <label>HSD17B13</label>
    </interactant>
    <organismsDiffer>false</organismsDiffer>
    <experiments>3</experiments>
</comment>
<comment type="interaction">
    <interactant intactId="EBI-12188413">
        <id>B2RUZ4</id>
    </interactant>
    <interactant intactId="EBI-725421">
        <id>P32942</id>
        <label>ICAM3</label>
    </interactant>
    <organismsDiffer>false</organismsDiffer>
    <experiments>3</experiments>
</comment>
<comment type="interaction">
    <interactant intactId="EBI-12188413">
        <id>B2RUZ4</id>
    </interactant>
    <interactant intactId="EBI-10266796">
        <id>Q8N5M9</id>
        <label>JAGN1</label>
    </interactant>
    <organismsDiffer>false</organismsDiffer>
    <experiments>3</experiments>
</comment>
<comment type="interaction">
    <interactant intactId="EBI-12188413">
        <id>B2RUZ4</id>
    </interactant>
    <interactant intactId="EBI-8632435">
        <id>P43628</id>
        <label>KIR2DL3</label>
    </interactant>
    <organismsDiffer>false</organismsDiffer>
    <experiments>3</experiments>
</comment>
<comment type="interaction">
    <interactant intactId="EBI-12188413">
        <id>B2RUZ4</id>
    </interactant>
    <interactant intactId="EBI-2820517">
        <id>Q8TAF8</id>
        <label>LHFPL5</label>
    </interactant>
    <organismsDiffer>false</organismsDiffer>
    <experiments>3</experiments>
</comment>
<comment type="interaction">
    <interactant intactId="EBI-12188413">
        <id>B2RUZ4</id>
    </interactant>
    <interactant intactId="EBI-2830349">
        <id>Q7Z4F1</id>
        <label>LRP10</label>
    </interactant>
    <organismsDiffer>false</organismsDiffer>
    <experiments>3</experiments>
</comment>
<comment type="interaction">
    <interactant intactId="EBI-12188413">
        <id>B2RUZ4</id>
    </interactant>
    <interactant intactId="EBI-3925442">
        <id>Q9HCJ2</id>
        <label>LRRC4C</label>
    </interactant>
    <organismsDiffer>false</organismsDiffer>
    <experiments>3</experiments>
</comment>
<comment type="interaction">
    <interactant intactId="EBI-12188413">
        <id>B2RUZ4</id>
    </interactant>
    <interactant intactId="EBI-11956541">
        <id>Q9GZY8-5</id>
        <label>MFF</label>
    </interactant>
    <organismsDiffer>false</organismsDiffer>
    <experiments>3</experiments>
</comment>
<comment type="interaction">
    <interactant intactId="EBI-12188413">
        <id>B2RUZ4</id>
    </interactant>
    <interactant intactId="EBI-2858252">
        <id>Q6ZSS7</id>
        <label>MFSD6</label>
    </interactant>
    <organismsDiffer>false</organismsDiffer>
    <experiments>3</experiments>
</comment>
<comment type="interaction">
    <interactant intactId="EBI-12188413">
        <id>B2RUZ4</id>
    </interactant>
    <interactant intactId="EBI-17263240">
        <id>P15941-11</id>
        <label>MUC1</label>
    </interactant>
    <organismsDiffer>false</organismsDiffer>
    <experiments>3</experiments>
</comment>
<comment type="interaction">
    <interactant intactId="EBI-12188413">
        <id>B2RUZ4</id>
    </interactant>
    <interactant intactId="EBI-2863682">
        <id>Q9Y3Q0</id>
        <label>NAALAD2</label>
    </interactant>
    <organismsDiffer>false</organismsDiffer>
    <experiments>3</experiments>
</comment>
<comment type="interaction">
    <interactant intactId="EBI-12188413">
        <id>B2RUZ4</id>
    </interactant>
    <interactant intactId="EBI-2682365">
        <id>Q8N183</id>
        <label>NDUFAF2</label>
    </interactant>
    <organismsDiffer>false</organismsDiffer>
    <experiments>3</experiments>
</comment>
<comment type="interaction">
    <interactant intactId="EBI-12188413">
        <id>B2RUZ4</id>
    </interactant>
    <interactant intactId="EBI-3919694">
        <id>P15151</id>
        <label>PVR</label>
    </interactant>
    <organismsDiffer>false</organismsDiffer>
    <experiments>3</experiments>
</comment>
<comment type="interaction">
    <interactant intactId="EBI-12188413">
        <id>B2RUZ4</id>
    </interactant>
    <interactant intactId="EBI-7545592">
        <id>Q9H6H4</id>
        <label>REEP4</label>
    </interactant>
    <organismsDiffer>false</organismsDiffer>
    <experiments>3</experiments>
</comment>
<comment type="interaction">
    <interactant intactId="EBI-12188413">
        <id>B2RUZ4</id>
    </interactant>
    <interactant intactId="EBI-10269209">
        <id>Q8NC24</id>
        <label>RELL2</label>
    </interactant>
    <organismsDiffer>false</organismsDiffer>
    <experiments>3</experiments>
</comment>
<comment type="interaction">
    <interactant intactId="EBI-12188413">
        <id>B2RUZ4</id>
    </interactant>
    <interactant intactId="EBI-10192441">
        <id>Q86VR2</id>
        <label>RETREG3</label>
    </interactant>
    <organismsDiffer>false</organismsDiffer>
    <experiments>3</experiments>
</comment>
<comment type="interaction">
    <interactant intactId="EBI-12188413">
        <id>B2RUZ4</id>
    </interactant>
    <interactant intactId="EBI-3920694">
        <id>Q9NR31</id>
        <label>SAR1A</label>
    </interactant>
    <organismsDiffer>false</organismsDiffer>
    <experiments>3</experiments>
</comment>
<comment type="interaction">
    <interactant intactId="EBI-12188413">
        <id>B2RUZ4</id>
    </interactant>
    <interactant intactId="EBI-17247926">
        <id>Q9NY72</id>
        <label>SCN3B</label>
    </interactant>
    <organismsDiffer>false</organismsDiffer>
    <experiments>3</experiments>
</comment>
<comment type="interaction">
    <interactant intactId="EBI-12188413">
        <id>B2RUZ4</id>
    </interactant>
    <interactant intactId="EBI-10204280">
        <id>A0A0S2Z4U3</id>
        <label>SDC3</label>
    </interactant>
    <organismsDiffer>false</organismsDiffer>
    <experiments>3</experiments>
</comment>
<comment type="interaction">
    <interactant intactId="EBI-12188413">
        <id>B2RUZ4</id>
    </interactant>
    <interactant intactId="EBI-2801178">
        <id>Q9Y286</id>
        <label>SIGLEC7</label>
    </interactant>
    <organismsDiffer>false</organismsDiffer>
    <experiments>3</experiments>
</comment>
<comment type="interaction">
    <interactant intactId="EBI-12188413">
        <id>B2RUZ4</id>
    </interactant>
    <interactant intactId="EBI-18159983">
        <id>Q3KNW5</id>
        <label>SLC10A6</label>
    </interactant>
    <organismsDiffer>false</organismsDiffer>
    <experiments>3</experiments>
</comment>
<comment type="interaction">
    <interactant intactId="EBI-12188413">
        <id>B2RUZ4</id>
    </interactant>
    <interactant intactId="EBI-17595455">
        <id>P54219-3</id>
        <label>SLC18A1</label>
    </interactant>
    <organismsDiffer>false</organismsDiffer>
    <experiments>3</experiments>
</comment>
<comment type="interaction">
    <interactant intactId="EBI-12188413">
        <id>B2RUZ4</id>
    </interactant>
    <interactant intactId="EBI-19115335">
        <id>Q86WA9</id>
        <label>SLC26A11</label>
    </interactant>
    <organismsDiffer>false</organismsDiffer>
    <experiments>3</experiments>
</comment>
<comment type="interaction">
    <interactant intactId="EBI-12188413">
        <id>B2RUZ4</id>
    </interactant>
    <interactant intactId="EBI-2800345">
        <id>Q86WV6</id>
        <label>STING1</label>
    </interactant>
    <organismsDiffer>false</organismsDiffer>
    <experiments>3</experiments>
</comment>
<comment type="interaction">
    <interactant intactId="EBI-12188413">
        <id>B2RUZ4</id>
    </interactant>
    <interactant intactId="EBI-712466">
        <id>Q16623</id>
        <label>STX1A</label>
    </interactant>
    <organismsDiffer>false</organismsDiffer>
    <experiments>3</experiments>
</comment>
<comment type="interaction">
    <interactant intactId="EBI-12188413">
        <id>B2RUZ4</id>
    </interactant>
    <interactant intactId="EBI-6448756">
        <id>Q96DZ7</id>
        <label>TM4SF19</label>
    </interactant>
    <organismsDiffer>false</organismsDiffer>
    <experiments>3</experiments>
</comment>
<comment type="interaction">
    <interactant intactId="EBI-12188413">
        <id>B2RUZ4</id>
    </interactant>
    <interactant intactId="EBI-13329239">
        <id>Q6P9G4</id>
        <label>TMEM154</label>
    </interactant>
    <organismsDiffer>false</organismsDiffer>
    <experiments>3</experiments>
</comment>
<comment type="interaction">
    <interactant intactId="EBI-12188413">
        <id>B2RUZ4</id>
    </interactant>
    <interactant intactId="EBI-3923061">
        <id>Q96B21</id>
        <label>TMEM45B</label>
    </interactant>
    <organismsDiffer>false</organismsDiffer>
    <experiments>3</experiments>
</comment>
<comment type="interaction">
    <interactant intactId="EBI-12188413">
        <id>B2RUZ4</id>
    </interactant>
    <interactant intactId="EBI-726044">
        <id>Q9NW97</id>
        <label>TMEM51</label>
    </interactant>
    <organismsDiffer>false</organismsDiffer>
    <experiments>3</experiments>
</comment>
<comment type="interaction">
    <interactant intactId="EBI-12188413">
        <id>B2RUZ4</id>
    </interactant>
    <interactant intactId="EBI-18178701">
        <id>Q4KMG9</id>
        <label>TMEM52B</label>
    </interactant>
    <organismsDiffer>false</organismsDiffer>
    <experiments>3</experiments>
</comment>
<comment type="interaction">
    <interactant intactId="EBI-12188413">
        <id>B2RUZ4</id>
    </interactant>
    <interactant intactId="EBI-2548832">
        <id>Q8N661</id>
        <label>TMEM86B</label>
    </interactant>
    <organismsDiffer>false</organismsDiffer>
    <experiments>3</experiments>
</comment>
<comment type="interaction">
    <interactant intactId="EBI-12188413">
        <id>B2RUZ4</id>
    </interactant>
    <interactant intactId="EBI-12345267">
        <id>O15393-2</id>
        <label>TMPRSS2</label>
    </interactant>
    <organismsDiffer>false</organismsDiffer>
    <experiments>3</experiments>
</comment>
<comment type="interaction">
    <interactant intactId="EBI-12188413">
        <id>B2RUZ4</id>
    </interactant>
    <interactant intactId="EBI-6447886">
        <id>Q9Y320</id>
        <label>TMX2</label>
    </interactant>
    <organismsDiffer>false</organismsDiffer>
    <experiments>3</experiments>
</comment>
<comment type="interaction">
    <interactant intactId="EBI-12188413">
        <id>B2RUZ4</id>
    </interactant>
    <interactant intactId="EBI-12837904">
        <id>Q96MV8</id>
        <label>ZDHHC15</label>
    </interactant>
    <organismsDiffer>false</organismsDiffer>
    <experiments>3</experiments>
</comment>
<comment type="subcellular location">
    <subcellularLocation>
        <location evidence="7">Cell membrane</location>
        <topology evidence="7">Single-pass type II membrane protein</topology>
    </subcellularLocation>
</comment>
<comment type="tissue specificity">
    <text evidence="5">Highly expressed in the bone marrow and expressed at lower levels in non-hematopoietic tissues. Highly expressed in erythroleukemia cell lines. Up-regulated in CD34+ hematopoietic progenitors cultured toward red blood cells.</text>
</comment>
<comment type="domain">
    <text evidence="7">The extracellular domain carries the Vel antigen.</text>
</comment>
<comment type="polymorphism">
    <text evidence="6">SMIM1 is responsible for the Vel blood group system (VEL) [MIM:615264]. The Vel antigen is present on red blood cells from all people except rare Vel-negative individuals who can form antibodies to Vel in response to transfusion or pregnancy. These antibodies may cause severe hemolytic reactions in blood recipients. In most cases, Vel-negative individuals are homozygous for a 17-nucleotide frameshift deletion in exon 3. In some cases, Vel-negative are heterozygous for the 17-nucleotide frameshift deletion and a missense variant at position 51.</text>
</comment>
<comment type="similarity">
    <text evidence="9">Belongs to the SMIM1 family.</text>
</comment>
<comment type="online information" name="Protein Spotlight">
    <link uri="https://www.proteinspotlight.org/back_issues/184/"/>
    <text>Seeing red - Issue 184 of October 2016</text>
</comment>
<feature type="chain" id="PRO_0000356182" description="Small integral membrane protein 1">
    <location>
        <begin position="1"/>
        <end position="78"/>
    </location>
</feature>
<feature type="topological domain" description="Cytoplasmic" evidence="7">
    <location>
        <begin position="1"/>
        <end position="46"/>
    </location>
</feature>
<feature type="transmembrane region" description="Helical; Signal-anchor for type II membrane protein" evidence="2">
    <location>
        <begin position="47"/>
        <end position="67"/>
    </location>
</feature>
<feature type="topological domain" description="Extracellular" evidence="7">
    <location>
        <begin position="68"/>
        <end position="78"/>
    </location>
</feature>
<feature type="region of interest" description="Disordered" evidence="3">
    <location>
        <begin position="1"/>
        <end position="20"/>
    </location>
</feature>
<feature type="region of interest" description="Displays the Vel antigen" evidence="7">
    <location>
        <begin position="68"/>
        <end position="78"/>
    </location>
</feature>
<feature type="compositionally biased region" description="Basic and acidic residues" evidence="3">
    <location>
        <begin position="1"/>
        <end position="18"/>
    </location>
</feature>
<feature type="modified residue" description="N-acetylmethionine" evidence="7">
    <location>
        <position position="1"/>
    </location>
</feature>
<feature type="modified residue" description="Phosphoserine" evidence="7">
    <location>
        <position position="6"/>
    </location>
</feature>
<feature type="modified residue" description="Phosphoserine" evidence="7">
    <location>
        <position position="17"/>
    </location>
</feature>
<feature type="modified residue" description="Phosphoserine" evidence="7 11 12">
    <location>
        <position position="22"/>
    </location>
</feature>
<feature type="modified residue" description="Phosphoserine" evidence="7 11">
    <location>
        <position position="27"/>
    </location>
</feature>
<feature type="sequence variant" id="VAR_069360" description="Found in Vel-negative population; uncertain significance; heterozygous with the 17-nucleotide frameshift deletion; dbSNP:rs1182690110." evidence="6">
    <original>M</original>
    <variation>K</variation>
    <location>
        <position position="51"/>
    </location>
</feature>
<feature type="sequence variant" id="VAR_069361" description="Found in Vel-negative population; uncertain significance; heterozygous with the 17-nucleotide frameshift deletion." evidence="6">
    <original>M</original>
    <variation>R</variation>
    <location>
        <position position="51"/>
    </location>
</feature>
<feature type="mutagenesis site" description="No effect on cell membrane localization; when associated with A-17; A-22 and A-27. No effect on cell surface expression of the Vel antigen; when associated with A-17; A-22 and A-27." evidence="7">
    <original>S</original>
    <variation>A</variation>
    <location>
        <position position="6"/>
    </location>
</feature>
<feature type="mutagenesis site" description="No effect on cell membrane localization; when associated with A-6; A-22 and A-27. No effect on cell surface expression of the Vel antigen; when associated with A-6; A-22 and A-27." evidence="7">
    <original>S</original>
    <variation>A</variation>
    <location>
        <position position="17"/>
    </location>
</feature>
<feature type="mutagenesis site" description="No effect on cell membrane localization; when associated with A-6; A-17 and A-27. No effect on cell surface expression of the Vel antigen; when associated with A-6; A-17 and A-27." evidence="7">
    <original>S</original>
    <variation>A</variation>
    <location>
        <position position="22"/>
    </location>
</feature>
<feature type="mutagenesis site" description="No effect on cell membrane localization; when associated with A-6; A-17 and A-22. No effect on cell surface expression of the Vel antigen; when associated with A-6; A-17 and A-22." evidence="7">
    <original>S</original>
    <variation>A</variation>
    <location>
        <position position="27"/>
    </location>
</feature>
<feature type="mutagenesis site" description="No effect on cell surface expression of the Vel antigen; when associated with S-43." evidence="7">
    <original>C</original>
    <variation>S</variation>
    <location>
        <position position="35"/>
    </location>
</feature>
<feature type="mutagenesis site" description="No effect on cell surface expression of the Vel antigen; when associated with S-35." evidence="7">
    <original>C</original>
    <variation>S</variation>
    <location>
        <position position="43"/>
    </location>
</feature>
<feature type="mutagenesis site" description="Loss of cell-surface expression of the Vel antigen." evidence="7">
    <location>
        <begin position="76"/>
        <end position="78"/>
    </location>
</feature>
<name>SMIM1_HUMAN</name>
<proteinExistence type="evidence at protein level"/>
<keyword id="KW-0007">Acetylation</keyword>
<keyword id="KW-0095">Blood group antigen</keyword>
<keyword id="KW-1003">Cell membrane</keyword>
<keyword id="KW-0903">Direct protein sequencing</keyword>
<keyword id="KW-1015">Disulfide bond</keyword>
<keyword id="KW-0472">Membrane</keyword>
<keyword id="KW-0597">Phosphoprotein</keyword>
<keyword id="KW-1267">Proteomics identification</keyword>
<keyword id="KW-1185">Reference proteome</keyword>
<keyword id="KW-0735">Signal-anchor</keyword>
<keyword id="KW-0812">Transmembrane</keyword>
<keyword id="KW-1133">Transmembrane helix</keyword>
<evidence type="ECO:0000250" key="1">
    <source>
        <dbReference type="UniProtKB" id="B3DHH5"/>
    </source>
</evidence>
<evidence type="ECO:0000255" key="2"/>
<evidence type="ECO:0000256" key="3">
    <source>
        <dbReference type="SAM" id="MobiDB-lite"/>
    </source>
</evidence>
<evidence type="ECO:0000269" key="4">
    <source>
    </source>
</evidence>
<evidence type="ECO:0000269" key="5">
    <source>
    </source>
</evidence>
<evidence type="ECO:0000269" key="6">
    <source>
    </source>
</evidence>
<evidence type="ECO:0000269" key="7">
    <source>
    </source>
</evidence>
<evidence type="ECO:0000303" key="8">
    <source>
    </source>
</evidence>
<evidence type="ECO:0000305" key="9"/>
<evidence type="ECO:0000312" key="10">
    <source>
        <dbReference type="HGNC" id="HGNC:44204"/>
    </source>
</evidence>
<evidence type="ECO:0007744" key="11">
    <source>
    </source>
</evidence>
<evidence type="ECO:0007744" key="12">
    <source>
    </source>
</evidence>
<sequence length="78" mass="8749">MQPQESHVHYSRWEDGSRDGVSLGAVSSTEEASRCRRISQRLCTGKLGIAMKVLGGVALFWIIFILGYLTGYYVHKCK</sequence>
<accession>B2RUZ4</accession>
<dbReference type="EMBL" id="AL365330">
    <property type="status" value="NOT_ANNOTATED_CDS"/>
    <property type="molecule type" value="Genomic_DNA"/>
</dbReference>
<dbReference type="EMBL" id="BC146945">
    <property type="status" value="NOT_ANNOTATED_CDS"/>
    <property type="molecule type" value="mRNA"/>
</dbReference>
<dbReference type="EMBL" id="BC146957">
    <property type="status" value="NOT_ANNOTATED_CDS"/>
    <property type="molecule type" value="mRNA"/>
</dbReference>
<dbReference type="CCDS" id="CCDS57966.1"/>
<dbReference type="RefSeq" id="NP_001157196.1">
    <property type="nucleotide sequence ID" value="NM_001163724.3"/>
</dbReference>
<dbReference type="RefSeq" id="NP_001275512.1">
    <property type="nucleotide sequence ID" value="NM_001288583.2"/>
</dbReference>
<dbReference type="RefSeq" id="NP_001366619.1">
    <property type="nucleotide sequence ID" value="NM_001379690.1"/>
</dbReference>
<dbReference type="RefSeq" id="NP_001366620.1">
    <property type="nucleotide sequence ID" value="NM_001379691.1"/>
</dbReference>
<dbReference type="RefSeq" id="XP_047275959.1">
    <property type="nucleotide sequence ID" value="XM_047420003.1"/>
</dbReference>
<dbReference type="SMR" id="B2RUZ4"/>
<dbReference type="BioGRID" id="132762">
    <property type="interactions" value="60"/>
</dbReference>
<dbReference type="FunCoup" id="B2RUZ4">
    <property type="interactions" value="225"/>
</dbReference>
<dbReference type="IntAct" id="B2RUZ4">
    <property type="interactions" value="56"/>
</dbReference>
<dbReference type="STRING" id="9606.ENSP00000457386"/>
<dbReference type="TCDB" id="1.A.124.1.1">
    <property type="family name" value="the small mitochondrial integral membrane protein (smim) family"/>
</dbReference>
<dbReference type="iPTMnet" id="B2RUZ4"/>
<dbReference type="PhosphoSitePlus" id="B2RUZ4"/>
<dbReference type="SwissPalm" id="B2RUZ4"/>
<dbReference type="BioMuta" id="SMIM1"/>
<dbReference type="jPOST" id="B2RUZ4"/>
<dbReference type="MassIVE" id="B2RUZ4"/>
<dbReference type="PaxDb" id="9606-ENSP00000457386"/>
<dbReference type="PeptideAtlas" id="B2RUZ4"/>
<dbReference type="Pumba" id="B2RUZ4"/>
<dbReference type="TopDownProteomics" id="B2RUZ4"/>
<dbReference type="Antibodypedia" id="74931">
    <property type="antibodies" value="34 antibodies from 8 providers"/>
</dbReference>
<dbReference type="DNASU" id="388588"/>
<dbReference type="Ensembl" id="ENST00000444870.7">
    <property type="protein sequence ID" value="ENSP00000457386.1"/>
    <property type="gene ID" value="ENSG00000235169.11"/>
</dbReference>
<dbReference type="Ensembl" id="ENST00000642557.4">
    <property type="protein sequence ID" value="ENSP00000496314.2"/>
    <property type="gene ID" value="ENSG00000235169.11"/>
</dbReference>
<dbReference type="GeneID" id="388588"/>
<dbReference type="KEGG" id="hsa:388588"/>
<dbReference type="MANE-Select" id="ENST00000642557.4">
    <property type="protein sequence ID" value="ENSP00000496314.2"/>
    <property type="RefSeq nucleotide sequence ID" value="NM_001288583.2"/>
    <property type="RefSeq protein sequence ID" value="NP_001275512.1"/>
</dbReference>
<dbReference type="AGR" id="HGNC:44204"/>
<dbReference type="CTD" id="388588"/>
<dbReference type="DisGeNET" id="388588"/>
<dbReference type="GeneCards" id="SMIM1"/>
<dbReference type="HGNC" id="HGNC:44204">
    <property type="gene designation" value="SMIM1"/>
</dbReference>
<dbReference type="HPA" id="ENSG00000235169">
    <property type="expression patterns" value="Tissue enhanced (bone marrow, heart muscle, testis)"/>
</dbReference>
<dbReference type="MalaCards" id="SMIM1"/>
<dbReference type="MIM" id="615242">
    <property type="type" value="gene"/>
</dbReference>
<dbReference type="MIM" id="615264">
    <property type="type" value="phenotype"/>
</dbReference>
<dbReference type="neXtProt" id="NX_B2RUZ4"/>
<dbReference type="OpenTargets" id="ENSG00000235169"/>
<dbReference type="VEuPathDB" id="HostDB:ENSG00000235169"/>
<dbReference type="eggNOG" id="ENOG502SASD">
    <property type="taxonomic scope" value="Eukaryota"/>
</dbReference>
<dbReference type="GeneTree" id="ENSGT00520000060291"/>
<dbReference type="HOGENOM" id="CLU_2621305_0_0_1"/>
<dbReference type="InParanoid" id="B2RUZ4"/>
<dbReference type="OMA" id="SRWENSH"/>
<dbReference type="OrthoDB" id="8633453at2759"/>
<dbReference type="PAN-GO" id="B2RUZ4">
    <property type="GO annotations" value="0 GO annotations based on evolutionary models"/>
</dbReference>
<dbReference type="PhylomeDB" id="B2RUZ4"/>
<dbReference type="PathwayCommons" id="B2RUZ4"/>
<dbReference type="SignaLink" id="B2RUZ4"/>
<dbReference type="BioGRID-ORCS" id="388588">
    <property type="hits" value="14 hits in 1138 CRISPR screens"/>
</dbReference>
<dbReference type="Pharos" id="B2RUZ4">
    <property type="development level" value="Tbio"/>
</dbReference>
<dbReference type="PRO" id="PR:B2RUZ4"/>
<dbReference type="Proteomes" id="UP000005640">
    <property type="component" value="Chromosome 1"/>
</dbReference>
<dbReference type="RNAct" id="B2RUZ4">
    <property type="molecule type" value="protein"/>
</dbReference>
<dbReference type="Bgee" id="ENSG00000235169">
    <property type="expression patterns" value="Expressed in right testis and 114 other cell types or tissues"/>
</dbReference>
<dbReference type="ExpressionAtlas" id="B2RUZ4">
    <property type="expression patterns" value="baseline and differential"/>
</dbReference>
<dbReference type="GO" id="GO:0009986">
    <property type="term" value="C:cell surface"/>
    <property type="evidence" value="ECO:0000314"/>
    <property type="project" value="UniProtKB"/>
</dbReference>
<dbReference type="GO" id="GO:0005886">
    <property type="term" value="C:plasma membrane"/>
    <property type="evidence" value="ECO:0000314"/>
    <property type="project" value="UniProtKB"/>
</dbReference>
<dbReference type="GO" id="GO:0042803">
    <property type="term" value="F:protein homodimerization activity"/>
    <property type="evidence" value="ECO:0000314"/>
    <property type="project" value="UniProtKB"/>
</dbReference>
<dbReference type="InterPro" id="IPR031744">
    <property type="entry name" value="SMIM1"/>
</dbReference>
<dbReference type="PANTHER" id="PTHR38503">
    <property type="entry name" value="SMALL INTEGRAL MEMBRANE PROTEIN 1"/>
    <property type="match status" value="1"/>
</dbReference>
<dbReference type="PANTHER" id="PTHR38503:SF1">
    <property type="entry name" value="SMALL INTEGRAL MEMBRANE PROTEIN 1"/>
    <property type="match status" value="1"/>
</dbReference>
<dbReference type="Pfam" id="PF15875">
    <property type="entry name" value="DUF4731"/>
    <property type="match status" value="1"/>
</dbReference>
<reference key="1">
    <citation type="journal article" date="2006" name="Nature">
        <title>The DNA sequence and biological annotation of human chromosome 1.</title>
        <authorList>
            <person name="Gregory S.G."/>
            <person name="Barlow K.F."/>
            <person name="McLay K.E."/>
            <person name="Kaul R."/>
            <person name="Swarbreck D."/>
            <person name="Dunham A."/>
            <person name="Scott C.E."/>
            <person name="Howe K.L."/>
            <person name="Woodfine K."/>
            <person name="Spencer C.C.A."/>
            <person name="Jones M.C."/>
            <person name="Gillson C."/>
            <person name="Searle S."/>
            <person name="Zhou Y."/>
            <person name="Kokocinski F."/>
            <person name="McDonald L."/>
            <person name="Evans R."/>
            <person name="Phillips K."/>
            <person name="Atkinson A."/>
            <person name="Cooper R."/>
            <person name="Jones C."/>
            <person name="Hall R.E."/>
            <person name="Andrews T.D."/>
            <person name="Lloyd C."/>
            <person name="Ainscough R."/>
            <person name="Almeida J.P."/>
            <person name="Ambrose K.D."/>
            <person name="Anderson F."/>
            <person name="Andrew R.W."/>
            <person name="Ashwell R.I.S."/>
            <person name="Aubin K."/>
            <person name="Babbage A.K."/>
            <person name="Bagguley C.L."/>
            <person name="Bailey J."/>
            <person name="Beasley H."/>
            <person name="Bethel G."/>
            <person name="Bird C.P."/>
            <person name="Bray-Allen S."/>
            <person name="Brown J.Y."/>
            <person name="Brown A.J."/>
            <person name="Buckley D."/>
            <person name="Burton J."/>
            <person name="Bye J."/>
            <person name="Carder C."/>
            <person name="Chapman J.C."/>
            <person name="Clark S.Y."/>
            <person name="Clarke G."/>
            <person name="Clee C."/>
            <person name="Cobley V."/>
            <person name="Collier R.E."/>
            <person name="Corby N."/>
            <person name="Coville G.J."/>
            <person name="Davies J."/>
            <person name="Deadman R."/>
            <person name="Dunn M."/>
            <person name="Earthrowl M."/>
            <person name="Ellington A.G."/>
            <person name="Errington H."/>
            <person name="Frankish A."/>
            <person name="Frankland J."/>
            <person name="French L."/>
            <person name="Garner P."/>
            <person name="Garnett J."/>
            <person name="Gay L."/>
            <person name="Ghori M.R.J."/>
            <person name="Gibson R."/>
            <person name="Gilby L.M."/>
            <person name="Gillett W."/>
            <person name="Glithero R.J."/>
            <person name="Grafham D.V."/>
            <person name="Griffiths C."/>
            <person name="Griffiths-Jones S."/>
            <person name="Grocock R."/>
            <person name="Hammond S."/>
            <person name="Harrison E.S.I."/>
            <person name="Hart E."/>
            <person name="Haugen E."/>
            <person name="Heath P.D."/>
            <person name="Holmes S."/>
            <person name="Holt K."/>
            <person name="Howden P.J."/>
            <person name="Hunt A.R."/>
            <person name="Hunt S.E."/>
            <person name="Hunter G."/>
            <person name="Isherwood J."/>
            <person name="James R."/>
            <person name="Johnson C."/>
            <person name="Johnson D."/>
            <person name="Joy A."/>
            <person name="Kay M."/>
            <person name="Kershaw J.K."/>
            <person name="Kibukawa M."/>
            <person name="Kimberley A.M."/>
            <person name="King A."/>
            <person name="Knights A.J."/>
            <person name="Lad H."/>
            <person name="Laird G."/>
            <person name="Lawlor S."/>
            <person name="Leongamornlert D.A."/>
            <person name="Lloyd D.M."/>
            <person name="Loveland J."/>
            <person name="Lovell J."/>
            <person name="Lush M.J."/>
            <person name="Lyne R."/>
            <person name="Martin S."/>
            <person name="Mashreghi-Mohammadi M."/>
            <person name="Matthews L."/>
            <person name="Matthews N.S.W."/>
            <person name="McLaren S."/>
            <person name="Milne S."/>
            <person name="Mistry S."/>
            <person name="Moore M.J.F."/>
            <person name="Nickerson T."/>
            <person name="O'Dell C.N."/>
            <person name="Oliver K."/>
            <person name="Palmeiri A."/>
            <person name="Palmer S.A."/>
            <person name="Parker A."/>
            <person name="Patel D."/>
            <person name="Pearce A.V."/>
            <person name="Peck A.I."/>
            <person name="Pelan S."/>
            <person name="Phelps K."/>
            <person name="Phillimore B.J."/>
            <person name="Plumb R."/>
            <person name="Rajan J."/>
            <person name="Raymond C."/>
            <person name="Rouse G."/>
            <person name="Saenphimmachak C."/>
            <person name="Sehra H.K."/>
            <person name="Sheridan E."/>
            <person name="Shownkeen R."/>
            <person name="Sims S."/>
            <person name="Skuce C.D."/>
            <person name="Smith M."/>
            <person name="Steward C."/>
            <person name="Subramanian S."/>
            <person name="Sycamore N."/>
            <person name="Tracey A."/>
            <person name="Tromans A."/>
            <person name="Van Helmond Z."/>
            <person name="Wall M."/>
            <person name="Wallis J.M."/>
            <person name="White S."/>
            <person name="Whitehead S.L."/>
            <person name="Wilkinson J.E."/>
            <person name="Willey D.L."/>
            <person name="Williams H."/>
            <person name="Wilming L."/>
            <person name="Wray P.W."/>
            <person name="Wu Z."/>
            <person name="Coulson A."/>
            <person name="Vaudin M."/>
            <person name="Sulston J.E."/>
            <person name="Durbin R.M."/>
            <person name="Hubbard T."/>
            <person name="Wooster R."/>
            <person name="Dunham I."/>
            <person name="Carter N.P."/>
            <person name="McVean G."/>
            <person name="Ross M.T."/>
            <person name="Harrow J."/>
            <person name="Olson M.V."/>
            <person name="Beck S."/>
            <person name="Rogers J."/>
            <person name="Bentley D.R."/>
        </authorList>
    </citation>
    <scope>NUCLEOTIDE SEQUENCE [LARGE SCALE GENOMIC DNA]</scope>
</reference>
<reference key="2">
    <citation type="journal article" date="2004" name="Genome Res.">
        <title>The status, quality, and expansion of the NIH full-length cDNA project: the Mammalian Gene Collection (MGC).</title>
        <authorList>
            <consortium name="The MGC Project Team"/>
        </authorList>
    </citation>
    <scope>NUCLEOTIDE SEQUENCE [LARGE SCALE MRNA]</scope>
</reference>
<reference key="3">
    <citation type="journal article" date="2013" name="EMBO Mol. Med.">
        <title>Disruption of SMIM1 causes the Vel- blood type.</title>
        <authorList>
            <person name="Ballif B.A."/>
            <person name="Helias V."/>
            <person name="Peyrard T."/>
            <person name="Menanteau C."/>
            <person name="Saison C."/>
            <person name="Lucien N."/>
            <person name="Bourgouin S."/>
            <person name="Le Gall M."/>
            <person name="Cartron J.P."/>
            <person name="Arnaud L."/>
        </authorList>
    </citation>
    <scope>PROTEIN SEQUENCE OF 1-10 AND 43-52</scope>
    <scope>IDENTIFICATION BY MASS SPECTROMETRY</scope>
    <scope>POLYMORPHISM</scope>
    <scope>SUBUNIT</scope>
    <scope>DISULFIDE BOND</scope>
</reference>
<reference key="4">
    <citation type="journal article" date="2008" name="Proc. Natl. Acad. Sci. U.S.A.">
        <title>A quantitative atlas of mitotic phosphorylation.</title>
        <authorList>
            <person name="Dephoure N."/>
            <person name="Zhou C."/>
            <person name="Villen J."/>
            <person name="Beausoleil S.A."/>
            <person name="Bakalarski C.E."/>
            <person name="Elledge S.J."/>
            <person name="Gygi S.P."/>
        </authorList>
    </citation>
    <scope>PHOSPHORYLATION [LARGE SCALE ANALYSIS] AT SER-22 AND SER-27</scope>
    <scope>IDENTIFICATION BY MASS SPECTROMETRY [LARGE SCALE ANALYSIS]</scope>
    <source>
        <tissue>Cervix carcinoma</tissue>
    </source>
</reference>
<reference key="5">
    <citation type="journal article" date="2013" name="Nat. Genet.">
        <title>Homozygosity for a null allele of SMIM1 defines the Vel-negative blood group phenotype.</title>
        <authorList>
            <person name="Storry J.R."/>
            <person name="Joud M."/>
            <person name="Christophersen M.K."/>
            <person name="Thuresson B."/>
            <person name="Akerstrom B."/>
            <person name="Sojka B.N."/>
            <person name="Nilsson B."/>
            <person name="Olsson M.L."/>
        </authorList>
    </citation>
    <scope>POLYMORPHISM</scope>
    <scope>SUBUNIT</scope>
    <scope>DISULFIDE BOND</scope>
    <scope>TISSUE SPECIFICITY</scope>
    <scope>TOPOLOGY</scope>
</reference>
<reference key="6">
    <citation type="journal article" date="2013" name="Nat. Genet.">
        <title>SMIM1 underlies the Vel blood group and influences red blood cell traits.</title>
        <authorList>
            <person name="Cvejic A."/>
            <person name="Haer-Wigman L."/>
            <person name="Stephens J.C."/>
            <person name="Kostadima M."/>
            <person name="Smethurst P.A."/>
            <person name="Frontini M."/>
            <person name="van den Akker E."/>
            <person name="Bertone P."/>
            <person name="Bielczyk-Maczynska E."/>
            <person name="Farrow S."/>
            <person name="Fehrmann R.S."/>
            <person name="Gray A."/>
            <person name="de Haas M."/>
            <person name="Haver V.G."/>
            <person name="Jordan G."/>
            <person name="Karjalainen J."/>
            <person name="Kerstens H.H."/>
            <person name="Kiddle G."/>
            <person name="Lloyd-Jones H."/>
            <person name="Needs M."/>
            <person name="Poole J."/>
            <person name="Soussan A.A."/>
            <person name="Rendon A."/>
            <person name="Rieneck K."/>
            <person name="Sambrook J.G."/>
            <person name="Schepers H."/>
            <person name="Sillje H.H."/>
            <person name="Sipos B."/>
            <person name="Swinkels D."/>
            <person name="Tamuri A.U."/>
            <person name="Verweij N."/>
            <person name="Watkins N.A."/>
            <person name="Westra H.J."/>
            <person name="Stemple D."/>
            <person name="Franke L."/>
            <person name="Soranzo N."/>
            <person name="Stunnenberg H.G."/>
            <person name="Goldman N."/>
            <person name="van der Harst P."/>
            <person name="van der Schoot C.E."/>
            <person name="Ouwehand W.H."/>
            <person name="Albers C.A."/>
        </authorList>
    </citation>
    <scope>POLYMORPHISM</scope>
    <scope>VARIANTS LYS-51 AND ARG-51</scope>
    <scope>CHARACTERIZATION OF VARIANTS LYS-51 AND ARG-51</scope>
</reference>
<reference key="7">
    <citation type="journal article" date="2014" name="J. Proteomics">
        <title>An enzyme assisted RP-RPLC approach for in-depth analysis of human liver phosphoproteome.</title>
        <authorList>
            <person name="Bian Y."/>
            <person name="Song C."/>
            <person name="Cheng K."/>
            <person name="Dong M."/>
            <person name="Wang F."/>
            <person name="Huang J."/>
            <person name="Sun D."/>
            <person name="Wang L."/>
            <person name="Ye M."/>
            <person name="Zou H."/>
        </authorList>
    </citation>
    <scope>PHOSPHORYLATION [LARGE SCALE ANALYSIS] AT SER-22</scope>
    <scope>IDENTIFICATION BY MASS SPECTROMETRY [LARGE SCALE ANALYSIS]</scope>
    <source>
        <tissue>Liver</tissue>
    </source>
</reference>
<reference key="8">
    <citation type="journal article" date="2015" name="FEBS Lett.">
        <title>SMIM1 is a type II transmembrane phosphoprotein and displays the Vel blood group antigen at its carboxyl-terminus.</title>
        <authorList>
            <person name="Arnaud L."/>
            <person name="Kelley L.P."/>
            <person name="Helias V."/>
            <person name="Cartron J.P."/>
            <person name="Ballif B.A."/>
        </authorList>
    </citation>
    <scope>PHOSPHORYLATION AT SER-6; SER-17; SER-22 AND SER-27</scope>
    <scope>SUBCELLULAR LOCATION</scope>
    <scope>TOPOLOGY</scope>
    <scope>MUTAGENESIS OF SER-6; SER-17; SER-22; SER-27; CYS-35; CYS-43 AND 76-LYS--LYS-78</scope>
    <scope>DOMAIN</scope>
    <scope>REGION</scope>
    <scope>ACETYLATION AT MET-1</scope>
    <scope>IDENTIFICATION BY MASS SPECTROMETRY</scope>
</reference>
<protein>
    <recommendedName>
        <fullName evidence="8 10">Small integral membrane protein 1</fullName>
    </recommendedName>
    <alternativeName>
        <fullName evidence="8">Vel blood group antigen</fullName>
    </alternativeName>
</protein>
<gene>
    <name evidence="8 10" type="primary">SMIM1</name>
</gene>